<protein>
    <recommendedName>
        <fullName evidence="1">Large ribosomal subunit protein bL31</fullName>
    </recommendedName>
    <alternativeName>
        <fullName evidence="2">50S ribosomal protein L31</fullName>
    </alternativeName>
</protein>
<organism>
    <name type="scientific">Vibrio cholerae serotype O1 (strain ATCC 39541 / Classical Ogawa 395 / O395)</name>
    <dbReference type="NCBI Taxonomy" id="345073"/>
    <lineage>
        <taxon>Bacteria</taxon>
        <taxon>Pseudomonadati</taxon>
        <taxon>Pseudomonadota</taxon>
        <taxon>Gammaproteobacteria</taxon>
        <taxon>Vibrionales</taxon>
        <taxon>Vibrionaceae</taxon>
        <taxon>Vibrio</taxon>
    </lineage>
</organism>
<accession>A5F4V7</accession>
<accession>C3LXS7</accession>
<comment type="function">
    <text evidence="1">Binds the 23S rRNA.</text>
</comment>
<comment type="cofactor">
    <cofactor evidence="1">
        <name>Zn(2+)</name>
        <dbReference type="ChEBI" id="CHEBI:29105"/>
    </cofactor>
    <text evidence="1">Binds 1 zinc ion per subunit.</text>
</comment>
<comment type="subunit">
    <text evidence="1">Part of the 50S ribosomal subunit.</text>
</comment>
<comment type="similarity">
    <text evidence="1">Belongs to the bacterial ribosomal protein bL31 family. Type A subfamily.</text>
</comment>
<keyword id="KW-0479">Metal-binding</keyword>
<keyword id="KW-0687">Ribonucleoprotein</keyword>
<keyword id="KW-0689">Ribosomal protein</keyword>
<keyword id="KW-0694">RNA-binding</keyword>
<keyword id="KW-0699">rRNA-binding</keyword>
<keyword id="KW-0862">Zinc</keyword>
<sequence>MKAGIHPEYKAVNATCSCGNSFVFNSTLGKDTMHLDVCDKCHPFYSGKQRIVDTGGRVERFNKRFGALSAKK</sequence>
<evidence type="ECO:0000255" key="1">
    <source>
        <dbReference type="HAMAP-Rule" id="MF_00501"/>
    </source>
</evidence>
<evidence type="ECO:0000305" key="2"/>
<gene>
    <name evidence="1" type="primary">rpmE</name>
    <name type="ordered locus">VC0395_A2252</name>
    <name type="ordered locus">VC395_2792</name>
</gene>
<name>RL31_VIBC3</name>
<dbReference type="EMBL" id="CP000627">
    <property type="protein sequence ID" value="ABQ20903.1"/>
    <property type="molecule type" value="Genomic_DNA"/>
</dbReference>
<dbReference type="EMBL" id="CP001235">
    <property type="protein sequence ID" value="ACP10777.1"/>
    <property type="molecule type" value="Genomic_DNA"/>
</dbReference>
<dbReference type="RefSeq" id="WP_000643446.1">
    <property type="nucleotide sequence ID" value="NZ_JAACZH010000007.1"/>
</dbReference>
<dbReference type="SMR" id="A5F4V7"/>
<dbReference type="GeneID" id="89513343"/>
<dbReference type="KEGG" id="vco:VC0395_A2252"/>
<dbReference type="KEGG" id="vcr:VC395_2792"/>
<dbReference type="PATRIC" id="fig|345073.21.peg.2690"/>
<dbReference type="eggNOG" id="COG0254">
    <property type="taxonomic scope" value="Bacteria"/>
</dbReference>
<dbReference type="HOGENOM" id="CLU_114306_4_3_6"/>
<dbReference type="OrthoDB" id="9803251at2"/>
<dbReference type="Proteomes" id="UP000000249">
    <property type="component" value="Chromosome 2"/>
</dbReference>
<dbReference type="GO" id="GO:1990904">
    <property type="term" value="C:ribonucleoprotein complex"/>
    <property type="evidence" value="ECO:0007669"/>
    <property type="project" value="UniProtKB-KW"/>
</dbReference>
<dbReference type="GO" id="GO:0005840">
    <property type="term" value="C:ribosome"/>
    <property type="evidence" value="ECO:0007669"/>
    <property type="project" value="UniProtKB-KW"/>
</dbReference>
<dbReference type="GO" id="GO:0046872">
    <property type="term" value="F:metal ion binding"/>
    <property type="evidence" value="ECO:0007669"/>
    <property type="project" value="UniProtKB-KW"/>
</dbReference>
<dbReference type="GO" id="GO:0019843">
    <property type="term" value="F:rRNA binding"/>
    <property type="evidence" value="ECO:0007669"/>
    <property type="project" value="UniProtKB-KW"/>
</dbReference>
<dbReference type="GO" id="GO:0003735">
    <property type="term" value="F:structural constituent of ribosome"/>
    <property type="evidence" value="ECO:0007669"/>
    <property type="project" value="InterPro"/>
</dbReference>
<dbReference type="GO" id="GO:0006412">
    <property type="term" value="P:translation"/>
    <property type="evidence" value="ECO:0007669"/>
    <property type="project" value="UniProtKB-UniRule"/>
</dbReference>
<dbReference type="Gene3D" id="4.10.830.30">
    <property type="entry name" value="Ribosomal protein L31"/>
    <property type="match status" value="1"/>
</dbReference>
<dbReference type="HAMAP" id="MF_00501">
    <property type="entry name" value="Ribosomal_bL31_1"/>
    <property type="match status" value="1"/>
</dbReference>
<dbReference type="InterPro" id="IPR034704">
    <property type="entry name" value="Ribosomal_bL28/bL31-like_sf"/>
</dbReference>
<dbReference type="InterPro" id="IPR002150">
    <property type="entry name" value="Ribosomal_bL31"/>
</dbReference>
<dbReference type="InterPro" id="IPR027491">
    <property type="entry name" value="Ribosomal_bL31_A"/>
</dbReference>
<dbReference type="InterPro" id="IPR042105">
    <property type="entry name" value="Ribosomal_bL31_sf"/>
</dbReference>
<dbReference type="NCBIfam" id="TIGR00105">
    <property type="entry name" value="L31"/>
    <property type="match status" value="1"/>
</dbReference>
<dbReference type="NCBIfam" id="NF000612">
    <property type="entry name" value="PRK00019.1"/>
    <property type="match status" value="1"/>
</dbReference>
<dbReference type="NCBIfam" id="NF001809">
    <property type="entry name" value="PRK00528.1"/>
    <property type="match status" value="1"/>
</dbReference>
<dbReference type="PANTHER" id="PTHR33280">
    <property type="entry name" value="50S RIBOSOMAL PROTEIN L31, CHLOROPLASTIC"/>
    <property type="match status" value="1"/>
</dbReference>
<dbReference type="PANTHER" id="PTHR33280:SF6">
    <property type="entry name" value="LARGE RIBOSOMAL SUBUNIT PROTEIN BL31A"/>
    <property type="match status" value="1"/>
</dbReference>
<dbReference type="Pfam" id="PF01197">
    <property type="entry name" value="Ribosomal_L31"/>
    <property type="match status" value="1"/>
</dbReference>
<dbReference type="PRINTS" id="PR01249">
    <property type="entry name" value="RIBOSOMALL31"/>
</dbReference>
<dbReference type="SUPFAM" id="SSF143800">
    <property type="entry name" value="L28p-like"/>
    <property type="match status" value="1"/>
</dbReference>
<dbReference type="PROSITE" id="PS01143">
    <property type="entry name" value="RIBOSOMAL_L31"/>
    <property type="match status" value="1"/>
</dbReference>
<reference key="1">
    <citation type="submission" date="2007-03" db="EMBL/GenBank/DDBJ databases">
        <authorList>
            <person name="Heidelberg J."/>
        </authorList>
    </citation>
    <scope>NUCLEOTIDE SEQUENCE [LARGE SCALE GENOMIC DNA]</scope>
    <source>
        <strain>ATCC 39541 / Classical Ogawa 395 / O395</strain>
    </source>
</reference>
<reference key="2">
    <citation type="journal article" date="2008" name="PLoS ONE">
        <title>A recalibrated molecular clock and independent origins for the cholera pandemic clones.</title>
        <authorList>
            <person name="Feng L."/>
            <person name="Reeves P.R."/>
            <person name="Lan R."/>
            <person name="Ren Y."/>
            <person name="Gao C."/>
            <person name="Zhou Z."/>
            <person name="Ren Y."/>
            <person name="Cheng J."/>
            <person name="Wang W."/>
            <person name="Wang J."/>
            <person name="Qian W."/>
            <person name="Li D."/>
            <person name="Wang L."/>
        </authorList>
    </citation>
    <scope>NUCLEOTIDE SEQUENCE [LARGE SCALE GENOMIC DNA]</scope>
    <source>
        <strain>ATCC 39541 / Classical Ogawa 395 / O395</strain>
    </source>
</reference>
<feature type="chain" id="PRO_1000126764" description="Large ribosomal subunit protein bL31">
    <location>
        <begin position="1"/>
        <end position="72"/>
    </location>
</feature>
<feature type="binding site" evidence="1">
    <location>
        <position position="16"/>
    </location>
    <ligand>
        <name>Zn(2+)</name>
        <dbReference type="ChEBI" id="CHEBI:29105"/>
    </ligand>
</feature>
<feature type="binding site" evidence="1">
    <location>
        <position position="18"/>
    </location>
    <ligand>
        <name>Zn(2+)</name>
        <dbReference type="ChEBI" id="CHEBI:29105"/>
    </ligand>
</feature>
<feature type="binding site" evidence="1">
    <location>
        <position position="38"/>
    </location>
    <ligand>
        <name>Zn(2+)</name>
        <dbReference type="ChEBI" id="CHEBI:29105"/>
    </ligand>
</feature>
<feature type="binding site" evidence="1">
    <location>
        <position position="41"/>
    </location>
    <ligand>
        <name>Zn(2+)</name>
        <dbReference type="ChEBI" id="CHEBI:29105"/>
    </ligand>
</feature>
<proteinExistence type="inferred from homology"/>